<reference key="1">
    <citation type="journal article" date="2000" name="Nature">
        <title>The complete sequence of the mucosal pathogen Ureaplasma urealyticum.</title>
        <authorList>
            <person name="Glass J.I."/>
            <person name="Lefkowitz E.J."/>
            <person name="Glass J.S."/>
            <person name="Heiner C.R."/>
            <person name="Chen E.Y."/>
            <person name="Cassell G.H."/>
        </authorList>
    </citation>
    <scope>NUCLEOTIDE SEQUENCE [LARGE SCALE GENOMIC DNA]</scope>
    <source>
        <strain>ATCC 700970</strain>
    </source>
</reference>
<gene>
    <name type="ordered locus">UU112</name>
</gene>
<proteinExistence type="predicted"/>
<keyword id="KW-1185">Reference proteome</keyword>
<name>Y112_UREPA</name>
<protein>
    <recommendedName>
        <fullName>Uncharacterized protein UU112</fullName>
    </recommendedName>
</protein>
<dbReference type="EMBL" id="AF222894">
    <property type="protein sequence ID" value="AAF30518.1"/>
    <property type="molecule type" value="Genomic_DNA"/>
</dbReference>
<dbReference type="RefSeq" id="WP_006689147.1">
    <property type="nucleotide sequence ID" value="NC_002162.1"/>
</dbReference>
<dbReference type="SMR" id="Q9PR32"/>
<dbReference type="STRING" id="273119.UU112"/>
<dbReference type="EnsemblBacteria" id="AAF30518">
    <property type="protein sequence ID" value="AAF30518"/>
    <property type="gene ID" value="UU112"/>
</dbReference>
<dbReference type="GeneID" id="29672147"/>
<dbReference type="KEGG" id="uur:UU112"/>
<dbReference type="eggNOG" id="COG0847">
    <property type="taxonomic scope" value="Bacteria"/>
</dbReference>
<dbReference type="HOGENOM" id="CLU_735563_0_0_14"/>
<dbReference type="OrthoDB" id="9803913at2"/>
<dbReference type="Proteomes" id="UP000000423">
    <property type="component" value="Chromosome"/>
</dbReference>
<dbReference type="GO" id="GO:0004527">
    <property type="term" value="F:exonuclease activity"/>
    <property type="evidence" value="ECO:0007669"/>
    <property type="project" value="UniProtKB-ARBA"/>
</dbReference>
<dbReference type="GO" id="GO:0003676">
    <property type="term" value="F:nucleic acid binding"/>
    <property type="evidence" value="ECO:0007669"/>
    <property type="project" value="InterPro"/>
</dbReference>
<dbReference type="Gene3D" id="3.30.420.10">
    <property type="entry name" value="Ribonuclease H-like superfamily/Ribonuclease H"/>
    <property type="match status" value="1"/>
</dbReference>
<dbReference type="InterPro" id="IPR013520">
    <property type="entry name" value="Exonuclease_RNaseT/DNA_pol3"/>
</dbReference>
<dbReference type="InterPro" id="IPR012337">
    <property type="entry name" value="RNaseH-like_sf"/>
</dbReference>
<dbReference type="InterPro" id="IPR036397">
    <property type="entry name" value="RNaseH_sf"/>
</dbReference>
<dbReference type="Pfam" id="PF00929">
    <property type="entry name" value="RNase_T"/>
    <property type="match status" value="1"/>
</dbReference>
<dbReference type="SUPFAM" id="SSF53098">
    <property type="entry name" value="Ribonuclease H-like"/>
    <property type="match status" value="1"/>
</dbReference>
<accession>Q9PR32</accession>
<sequence>MKICDNISEINDDQDLVFIDIEATDSKGEQRIIQFSGYRLNIKKNKIFNFNKKFNPEQEINSRIKTLLNFNKNFNNIEQMPKLDKQAAREIYCFVKNAIVITFTDFDIKKMHELFTYYNFDFEKIVYFDVYKFFEKKLQTKSVPSLFSLGILSGIKINFFKLHNALYDAFILKEIFMCIRHKTNEELYEMYRYYEFLPKIISSSYFVTNEQEKNRGIIKKEIKYVMYIKEFDFSNKFNLDFVVYKKDHHFYSKPIYDSSLELQTISSLTSKSNFMKVKLANIFFNYLSKSAVFSIKKLSIKQSEKFLKFYKTQTNKRKVIKVLNLNLKKEIKPENFVIKAQIICEILFKNPIIHHFVHEYLKIFQNIFSQEEKDN</sequence>
<organism>
    <name type="scientific">Ureaplasma parvum serovar 3 (strain ATCC 700970)</name>
    <dbReference type="NCBI Taxonomy" id="273119"/>
    <lineage>
        <taxon>Bacteria</taxon>
        <taxon>Bacillati</taxon>
        <taxon>Mycoplasmatota</taxon>
        <taxon>Mycoplasmoidales</taxon>
        <taxon>Mycoplasmoidaceae</taxon>
        <taxon>Ureaplasma</taxon>
    </lineage>
</organism>
<feature type="chain" id="PRO_0000220800" description="Uncharacterized protein UU112">
    <location>
        <begin position="1"/>
        <end position="375"/>
    </location>
</feature>